<keyword id="KW-0028">Amino-acid biosynthesis</keyword>
<keyword id="KW-0368">Histidine biosynthesis</keyword>
<keyword id="KW-0378">Hydrolase</keyword>
<keyword id="KW-0486">Methionine biosynthesis</keyword>
<keyword id="KW-0511">Multifunctional enzyme</keyword>
<keyword id="KW-0521">NADP</keyword>
<keyword id="KW-0554">One-carbon metabolism</keyword>
<keyword id="KW-0560">Oxidoreductase</keyword>
<keyword id="KW-0658">Purine biosynthesis</keyword>
<name>FOLD_BACC1</name>
<evidence type="ECO:0000255" key="1">
    <source>
        <dbReference type="HAMAP-Rule" id="MF_01576"/>
    </source>
</evidence>
<organism>
    <name type="scientific">Bacillus cereus (strain ATCC 10987 / NRS 248)</name>
    <dbReference type="NCBI Taxonomy" id="222523"/>
    <lineage>
        <taxon>Bacteria</taxon>
        <taxon>Bacillati</taxon>
        <taxon>Bacillota</taxon>
        <taxon>Bacilli</taxon>
        <taxon>Bacillales</taxon>
        <taxon>Bacillaceae</taxon>
        <taxon>Bacillus</taxon>
        <taxon>Bacillus cereus group</taxon>
    </lineage>
</organism>
<feature type="chain" id="PRO_0000268266" description="Bifunctional protein FolD">
    <location>
        <begin position="1"/>
        <end position="286"/>
    </location>
</feature>
<feature type="binding site" evidence="1">
    <location>
        <begin position="165"/>
        <end position="167"/>
    </location>
    <ligand>
        <name>NADP(+)</name>
        <dbReference type="ChEBI" id="CHEBI:58349"/>
    </ligand>
</feature>
<feature type="binding site" evidence="1">
    <location>
        <position position="190"/>
    </location>
    <ligand>
        <name>NADP(+)</name>
        <dbReference type="ChEBI" id="CHEBI:58349"/>
    </ligand>
</feature>
<feature type="binding site" evidence="1">
    <location>
        <position position="231"/>
    </location>
    <ligand>
        <name>NADP(+)</name>
        <dbReference type="ChEBI" id="CHEBI:58349"/>
    </ligand>
</feature>
<accession>Q731B2</accession>
<gene>
    <name evidence="1" type="primary">folD</name>
    <name type="ordered locus">BCE_4254</name>
</gene>
<proteinExistence type="inferred from homology"/>
<sequence length="286" mass="31124">MVAVIIKGNEVAEKKRAQLTEEVVKLKEQGIVPGLAVILVGEDPASRSYVKGKEKGCEQVGIYSELIEFPETITEERLLAEIDRLNGDDRINGILVQLPLPKHIEEKAIIERISPEKDVDGFHPISVGRMMTGQDTFLPCTPHGIVELVKETNLDISGKHVVVIGRSNIVGKPVGQLFLNENATVTYCHSKTQNMKELTKLADILIVAVGRPKMVTADYLKEGAVVIDVGVNRLETGKLCGDVDFDNVLDVAGYITPVPKGVGPMTITMLLHNTVESAKRAGVVCK</sequence>
<protein>
    <recommendedName>
        <fullName evidence="1">Bifunctional protein FolD</fullName>
    </recommendedName>
    <domain>
        <recommendedName>
            <fullName evidence="1">Methylenetetrahydrofolate dehydrogenase</fullName>
            <ecNumber evidence="1">1.5.1.5</ecNumber>
        </recommendedName>
    </domain>
    <domain>
        <recommendedName>
            <fullName evidence="1">Methenyltetrahydrofolate cyclohydrolase</fullName>
            <ecNumber evidence="1">3.5.4.9</ecNumber>
        </recommendedName>
    </domain>
</protein>
<dbReference type="EC" id="1.5.1.5" evidence="1"/>
<dbReference type="EC" id="3.5.4.9" evidence="1"/>
<dbReference type="EMBL" id="AE017194">
    <property type="protein sequence ID" value="AAS43155.1"/>
    <property type="molecule type" value="Genomic_DNA"/>
</dbReference>
<dbReference type="SMR" id="Q731B2"/>
<dbReference type="KEGG" id="bca:BCE_4254"/>
<dbReference type="HOGENOM" id="CLU_034045_2_1_9"/>
<dbReference type="UniPathway" id="UPA00193"/>
<dbReference type="Proteomes" id="UP000002527">
    <property type="component" value="Chromosome"/>
</dbReference>
<dbReference type="GO" id="GO:0005829">
    <property type="term" value="C:cytosol"/>
    <property type="evidence" value="ECO:0007669"/>
    <property type="project" value="TreeGrafter"/>
</dbReference>
<dbReference type="GO" id="GO:0004477">
    <property type="term" value="F:methenyltetrahydrofolate cyclohydrolase activity"/>
    <property type="evidence" value="ECO:0007669"/>
    <property type="project" value="UniProtKB-UniRule"/>
</dbReference>
<dbReference type="GO" id="GO:0004488">
    <property type="term" value="F:methylenetetrahydrofolate dehydrogenase (NADP+) activity"/>
    <property type="evidence" value="ECO:0007669"/>
    <property type="project" value="UniProtKB-UniRule"/>
</dbReference>
<dbReference type="GO" id="GO:0000105">
    <property type="term" value="P:L-histidine biosynthetic process"/>
    <property type="evidence" value="ECO:0007669"/>
    <property type="project" value="UniProtKB-KW"/>
</dbReference>
<dbReference type="GO" id="GO:0009086">
    <property type="term" value="P:methionine biosynthetic process"/>
    <property type="evidence" value="ECO:0007669"/>
    <property type="project" value="UniProtKB-KW"/>
</dbReference>
<dbReference type="GO" id="GO:0006164">
    <property type="term" value="P:purine nucleotide biosynthetic process"/>
    <property type="evidence" value="ECO:0007669"/>
    <property type="project" value="UniProtKB-KW"/>
</dbReference>
<dbReference type="GO" id="GO:0035999">
    <property type="term" value="P:tetrahydrofolate interconversion"/>
    <property type="evidence" value="ECO:0007669"/>
    <property type="project" value="UniProtKB-UniRule"/>
</dbReference>
<dbReference type="CDD" id="cd01080">
    <property type="entry name" value="NAD_bind_m-THF_DH_Cyclohyd"/>
    <property type="match status" value="1"/>
</dbReference>
<dbReference type="FunFam" id="3.40.50.10860:FF:000001">
    <property type="entry name" value="Bifunctional protein FolD"/>
    <property type="match status" value="1"/>
</dbReference>
<dbReference type="FunFam" id="3.40.50.720:FF:000094">
    <property type="entry name" value="Bifunctional protein FolD"/>
    <property type="match status" value="1"/>
</dbReference>
<dbReference type="Gene3D" id="3.40.50.10860">
    <property type="entry name" value="Leucine Dehydrogenase, chain A, domain 1"/>
    <property type="match status" value="1"/>
</dbReference>
<dbReference type="Gene3D" id="3.40.50.720">
    <property type="entry name" value="NAD(P)-binding Rossmann-like Domain"/>
    <property type="match status" value="1"/>
</dbReference>
<dbReference type="HAMAP" id="MF_01576">
    <property type="entry name" value="THF_DHG_CYH"/>
    <property type="match status" value="1"/>
</dbReference>
<dbReference type="InterPro" id="IPR046346">
    <property type="entry name" value="Aminoacid_DH-like_N_sf"/>
</dbReference>
<dbReference type="InterPro" id="IPR036291">
    <property type="entry name" value="NAD(P)-bd_dom_sf"/>
</dbReference>
<dbReference type="InterPro" id="IPR000672">
    <property type="entry name" value="THF_DH/CycHdrlase"/>
</dbReference>
<dbReference type="InterPro" id="IPR020630">
    <property type="entry name" value="THF_DH/CycHdrlase_cat_dom"/>
</dbReference>
<dbReference type="InterPro" id="IPR020867">
    <property type="entry name" value="THF_DH/CycHdrlase_CS"/>
</dbReference>
<dbReference type="InterPro" id="IPR020631">
    <property type="entry name" value="THF_DH/CycHdrlase_NAD-bd_dom"/>
</dbReference>
<dbReference type="NCBIfam" id="NF008058">
    <property type="entry name" value="PRK10792.1"/>
    <property type="match status" value="1"/>
</dbReference>
<dbReference type="NCBIfam" id="NF010783">
    <property type="entry name" value="PRK14186.1"/>
    <property type="match status" value="1"/>
</dbReference>
<dbReference type="PANTHER" id="PTHR48099:SF5">
    <property type="entry name" value="C-1-TETRAHYDROFOLATE SYNTHASE, CYTOPLASMIC"/>
    <property type="match status" value="1"/>
</dbReference>
<dbReference type="PANTHER" id="PTHR48099">
    <property type="entry name" value="C-1-TETRAHYDROFOLATE SYNTHASE, CYTOPLASMIC-RELATED"/>
    <property type="match status" value="1"/>
</dbReference>
<dbReference type="Pfam" id="PF00763">
    <property type="entry name" value="THF_DHG_CYH"/>
    <property type="match status" value="1"/>
</dbReference>
<dbReference type="Pfam" id="PF02882">
    <property type="entry name" value="THF_DHG_CYH_C"/>
    <property type="match status" value="1"/>
</dbReference>
<dbReference type="PRINTS" id="PR00085">
    <property type="entry name" value="THFDHDRGNASE"/>
</dbReference>
<dbReference type="SUPFAM" id="SSF53223">
    <property type="entry name" value="Aminoacid dehydrogenase-like, N-terminal domain"/>
    <property type="match status" value="1"/>
</dbReference>
<dbReference type="SUPFAM" id="SSF51735">
    <property type="entry name" value="NAD(P)-binding Rossmann-fold domains"/>
    <property type="match status" value="1"/>
</dbReference>
<dbReference type="PROSITE" id="PS00767">
    <property type="entry name" value="THF_DHG_CYH_2"/>
    <property type="match status" value="1"/>
</dbReference>
<reference key="1">
    <citation type="journal article" date="2004" name="Nucleic Acids Res.">
        <title>The genome sequence of Bacillus cereus ATCC 10987 reveals metabolic adaptations and a large plasmid related to Bacillus anthracis pXO1.</title>
        <authorList>
            <person name="Rasko D.A."/>
            <person name="Ravel J."/>
            <person name="Oekstad O.A."/>
            <person name="Helgason E."/>
            <person name="Cer R.Z."/>
            <person name="Jiang L."/>
            <person name="Shores K.A."/>
            <person name="Fouts D.E."/>
            <person name="Tourasse N.J."/>
            <person name="Angiuoli S.V."/>
            <person name="Kolonay J.F."/>
            <person name="Nelson W.C."/>
            <person name="Kolstoe A.-B."/>
            <person name="Fraser C.M."/>
            <person name="Read T.D."/>
        </authorList>
    </citation>
    <scope>NUCLEOTIDE SEQUENCE [LARGE SCALE GENOMIC DNA]</scope>
    <source>
        <strain>ATCC 10987 / NRS 248</strain>
    </source>
</reference>
<comment type="function">
    <text evidence="1">Catalyzes the oxidation of 5,10-methylenetetrahydrofolate to 5,10-methenyltetrahydrofolate and then the hydrolysis of 5,10-methenyltetrahydrofolate to 10-formyltetrahydrofolate.</text>
</comment>
<comment type="catalytic activity">
    <reaction evidence="1">
        <text>(6R)-5,10-methylene-5,6,7,8-tetrahydrofolate + NADP(+) = (6R)-5,10-methenyltetrahydrofolate + NADPH</text>
        <dbReference type="Rhea" id="RHEA:22812"/>
        <dbReference type="ChEBI" id="CHEBI:15636"/>
        <dbReference type="ChEBI" id="CHEBI:57455"/>
        <dbReference type="ChEBI" id="CHEBI:57783"/>
        <dbReference type="ChEBI" id="CHEBI:58349"/>
        <dbReference type="EC" id="1.5.1.5"/>
    </reaction>
</comment>
<comment type="catalytic activity">
    <reaction evidence="1">
        <text>(6R)-5,10-methenyltetrahydrofolate + H2O = (6R)-10-formyltetrahydrofolate + H(+)</text>
        <dbReference type="Rhea" id="RHEA:23700"/>
        <dbReference type="ChEBI" id="CHEBI:15377"/>
        <dbReference type="ChEBI" id="CHEBI:15378"/>
        <dbReference type="ChEBI" id="CHEBI:57455"/>
        <dbReference type="ChEBI" id="CHEBI:195366"/>
        <dbReference type="EC" id="3.5.4.9"/>
    </reaction>
</comment>
<comment type="pathway">
    <text evidence="1">One-carbon metabolism; tetrahydrofolate interconversion.</text>
</comment>
<comment type="subunit">
    <text evidence="1">Homodimer.</text>
</comment>
<comment type="similarity">
    <text evidence="1">Belongs to the tetrahydrofolate dehydrogenase/cyclohydrolase family.</text>
</comment>